<evidence type="ECO:0000255" key="1">
    <source>
        <dbReference type="HAMAP-Rule" id="MF_00003"/>
    </source>
</evidence>
<gene>
    <name evidence="1" type="primary">rbfA</name>
    <name type="ordered locus">Tgr7_1004</name>
</gene>
<protein>
    <recommendedName>
        <fullName evidence="1">Ribosome-binding factor A</fullName>
    </recommendedName>
</protein>
<dbReference type="EMBL" id="CP001339">
    <property type="protein sequence ID" value="ACL72092.1"/>
    <property type="molecule type" value="Genomic_DNA"/>
</dbReference>
<dbReference type="RefSeq" id="WP_012637576.1">
    <property type="nucleotide sequence ID" value="NC_011901.1"/>
</dbReference>
<dbReference type="SMR" id="B8GP03"/>
<dbReference type="STRING" id="396588.Tgr7_1004"/>
<dbReference type="KEGG" id="tgr:Tgr7_1004"/>
<dbReference type="eggNOG" id="COG0858">
    <property type="taxonomic scope" value="Bacteria"/>
</dbReference>
<dbReference type="HOGENOM" id="CLU_089475_5_0_6"/>
<dbReference type="OrthoDB" id="307788at2"/>
<dbReference type="Proteomes" id="UP000002383">
    <property type="component" value="Chromosome"/>
</dbReference>
<dbReference type="GO" id="GO:0005829">
    <property type="term" value="C:cytosol"/>
    <property type="evidence" value="ECO:0007669"/>
    <property type="project" value="TreeGrafter"/>
</dbReference>
<dbReference type="GO" id="GO:0043024">
    <property type="term" value="F:ribosomal small subunit binding"/>
    <property type="evidence" value="ECO:0007669"/>
    <property type="project" value="TreeGrafter"/>
</dbReference>
<dbReference type="GO" id="GO:0030490">
    <property type="term" value="P:maturation of SSU-rRNA"/>
    <property type="evidence" value="ECO:0007669"/>
    <property type="project" value="UniProtKB-UniRule"/>
</dbReference>
<dbReference type="Gene3D" id="3.30.300.20">
    <property type="match status" value="1"/>
</dbReference>
<dbReference type="HAMAP" id="MF_00003">
    <property type="entry name" value="RbfA"/>
    <property type="match status" value="1"/>
</dbReference>
<dbReference type="InterPro" id="IPR015946">
    <property type="entry name" value="KH_dom-like_a/b"/>
</dbReference>
<dbReference type="InterPro" id="IPR000238">
    <property type="entry name" value="RbfA"/>
</dbReference>
<dbReference type="InterPro" id="IPR023799">
    <property type="entry name" value="RbfA_dom_sf"/>
</dbReference>
<dbReference type="InterPro" id="IPR020053">
    <property type="entry name" value="Ribosome-bd_factorA_CS"/>
</dbReference>
<dbReference type="NCBIfam" id="TIGR00082">
    <property type="entry name" value="rbfA"/>
    <property type="match status" value="1"/>
</dbReference>
<dbReference type="PANTHER" id="PTHR33515">
    <property type="entry name" value="RIBOSOME-BINDING FACTOR A, CHLOROPLASTIC-RELATED"/>
    <property type="match status" value="1"/>
</dbReference>
<dbReference type="PANTHER" id="PTHR33515:SF1">
    <property type="entry name" value="RIBOSOME-BINDING FACTOR A, CHLOROPLASTIC-RELATED"/>
    <property type="match status" value="1"/>
</dbReference>
<dbReference type="Pfam" id="PF02033">
    <property type="entry name" value="RBFA"/>
    <property type="match status" value="1"/>
</dbReference>
<dbReference type="SUPFAM" id="SSF89919">
    <property type="entry name" value="Ribosome-binding factor A, RbfA"/>
    <property type="match status" value="1"/>
</dbReference>
<dbReference type="PROSITE" id="PS01319">
    <property type="entry name" value="RBFA"/>
    <property type="match status" value="1"/>
</dbReference>
<accession>B8GP03</accession>
<sequence length="129" mass="14796">MPRDFSRTERVGDQIQRELAELIRMELKDPRVGMVTLAGVEVSRDLAHAKVWFTVLGSEQQIADTTEGLQRAAGFLRRELGRRMRLRTVPHLHFQYDDTQEKGARLSALIDKAVAEDRAQHPDDDEDRS</sequence>
<feature type="chain" id="PRO_1000116223" description="Ribosome-binding factor A">
    <location>
        <begin position="1"/>
        <end position="129"/>
    </location>
</feature>
<proteinExistence type="inferred from homology"/>
<keyword id="KW-0963">Cytoplasm</keyword>
<keyword id="KW-1185">Reference proteome</keyword>
<keyword id="KW-0690">Ribosome biogenesis</keyword>
<comment type="function">
    <text evidence="1">One of several proteins that assist in the late maturation steps of the functional core of the 30S ribosomal subunit. Associates with free 30S ribosomal subunits (but not with 30S subunits that are part of 70S ribosomes or polysomes). Required for efficient processing of 16S rRNA. May interact with the 5'-terminal helix region of 16S rRNA.</text>
</comment>
<comment type="subunit">
    <text evidence="1">Monomer. Binds 30S ribosomal subunits, but not 50S ribosomal subunits or 70S ribosomes.</text>
</comment>
<comment type="subcellular location">
    <subcellularLocation>
        <location evidence="1">Cytoplasm</location>
    </subcellularLocation>
</comment>
<comment type="similarity">
    <text evidence="1">Belongs to the RbfA family.</text>
</comment>
<reference key="1">
    <citation type="journal article" date="2011" name="Stand. Genomic Sci.">
        <title>Complete genome sequence of 'Thioalkalivibrio sulfidophilus' HL-EbGr7.</title>
        <authorList>
            <person name="Muyzer G."/>
            <person name="Sorokin D.Y."/>
            <person name="Mavromatis K."/>
            <person name="Lapidus A."/>
            <person name="Clum A."/>
            <person name="Ivanova N."/>
            <person name="Pati A."/>
            <person name="d'Haeseleer P."/>
            <person name="Woyke T."/>
            <person name="Kyrpides N.C."/>
        </authorList>
    </citation>
    <scope>NUCLEOTIDE SEQUENCE [LARGE SCALE GENOMIC DNA]</scope>
    <source>
        <strain>HL-EbGR7</strain>
    </source>
</reference>
<name>RBFA_THISH</name>
<organism>
    <name type="scientific">Thioalkalivibrio sulfidiphilus (strain HL-EbGR7)</name>
    <dbReference type="NCBI Taxonomy" id="396588"/>
    <lineage>
        <taxon>Bacteria</taxon>
        <taxon>Pseudomonadati</taxon>
        <taxon>Pseudomonadota</taxon>
        <taxon>Gammaproteobacteria</taxon>
        <taxon>Chromatiales</taxon>
        <taxon>Ectothiorhodospiraceae</taxon>
        <taxon>Thioalkalivibrio</taxon>
    </lineage>
</organism>